<feature type="chain" id="PRO_0000136808" description="Large ribosomal subunit protein eL8">
    <location>
        <begin position="1"/>
        <end position="121"/>
    </location>
</feature>
<keyword id="KW-0963">Cytoplasm</keyword>
<keyword id="KW-1185">Reference proteome</keyword>
<keyword id="KW-0687">Ribonucleoprotein</keyword>
<keyword id="KW-0689">Ribosomal protein</keyword>
<keyword id="KW-0694">RNA-binding</keyword>
<keyword id="KW-0699">rRNA-binding</keyword>
<keyword id="KW-0819">tRNA processing</keyword>
<reference key="1">
    <citation type="journal article" date="2000" name="Nature">
        <title>The genome sequence of the thermoacidophilic scavenger Thermoplasma acidophilum.</title>
        <authorList>
            <person name="Ruepp A."/>
            <person name="Graml W."/>
            <person name="Santos-Martinez M.-L."/>
            <person name="Koretke K.K."/>
            <person name="Volker C."/>
            <person name="Mewes H.-W."/>
            <person name="Frishman D."/>
            <person name="Stocker S."/>
            <person name="Lupas A.N."/>
            <person name="Baumeister W."/>
        </authorList>
    </citation>
    <scope>NUCLEOTIDE SEQUENCE [LARGE SCALE GENOMIC DNA]</scope>
    <source>
        <strain>ATCC 25905 / DSM 1728 / JCM 9062 / NBRC 15155 / AMRC-C165</strain>
    </source>
</reference>
<accession>Q9HJ56</accession>
<proteinExistence type="inferred from homology"/>
<organism>
    <name type="scientific">Thermoplasma acidophilum (strain ATCC 25905 / DSM 1728 / JCM 9062 / NBRC 15155 / AMRC-C165)</name>
    <dbReference type="NCBI Taxonomy" id="273075"/>
    <lineage>
        <taxon>Archaea</taxon>
        <taxon>Methanobacteriati</taxon>
        <taxon>Thermoplasmatota</taxon>
        <taxon>Thermoplasmata</taxon>
        <taxon>Thermoplasmatales</taxon>
        <taxon>Thermoplasmataceae</taxon>
        <taxon>Thermoplasma</taxon>
    </lineage>
</organism>
<dbReference type="EMBL" id="AL445066">
    <property type="protein sequence ID" value="CAC12243.1"/>
    <property type="molecule type" value="Genomic_DNA"/>
</dbReference>
<dbReference type="RefSeq" id="WP_010901526.1">
    <property type="nucleotide sequence ID" value="NC_002578.1"/>
</dbReference>
<dbReference type="SMR" id="Q9HJ56"/>
<dbReference type="FunCoup" id="Q9HJ56">
    <property type="interactions" value="175"/>
</dbReference>
<dbReference type="STRING" id="273075.gene:9572337"/>
<dbReference type="PaxDb" id="273075-Ta1116"/>
<dbReference type="EnsemblBacteria" id="CAC12243">
    <property type="protein sequence ID" value="CAC12243"/>
    <property type="gene ID" value="CAC12243"/>
</dbReference>
<dbReference type="KEGG" id="tac:Ta1116"/>
<dbReference type="eggNOG" id="arCOG01751">
    <property type="taxonomic scope" value="Archaea"/>
</dbReference>
<dbReference type="HOGENOM" id="CLU_084513_4_0_2"/>
<dbReference type="InParanoid" id="Q9HJ56"/>
<dbReference type="OrthoDB" id="25810at2157"/>
<dbReference type="Proteomes" id="UP000001024">
    <property type="component" value="Chromosome"/>
</dbReference>
<dbReference type="GO" id="GO:0005737">
    <property type="term" value="C:cytoplasm"/>
    <property type="evidence" value="ECO:0007669"/>
    <property type="project" value="UniProtKB-SubCell"/>
</dbReference>
<dbReference type="GO" id="GO:1990904">
    <property type="term" value="C:ribonucleoprotein complex"/>
    <property type="evidence" value="ECO:0007669"/>
    <property type="project" value="UniProtKB-KW"/>
</dbReference>
<dbReference type="GO" id="GO:0005840">
    <property type="term" value="C:ribosome"/>
    <property type="evidence" value="ECO:0007669"/>
    <property type="project" value="UniProtKB-KW"/>
</dbReference>
<dbReference type="GO" id="GO:0004526">
    <property type="term" value="F:ribonuclease P activity"/>
    <property type="evidence" value="ECO:0007669"/>
    <property type="project" value="UniProtKB-UniRule"/>
</dbReference>
<dbReference type="GO" id="GO:0019843">
    <property type="term" value="F:rRNA binding"/>
    <property type="evidence" value="ECO:0007669"/>
    <property type="project" value="UniProtKB-KW"/>
</dbReference>
<dbReference type="GO" id="GO:0003735">
    <property type="term" value="F:structural constituent of ribosome"/>
    <property type="evidence" value="ECO:0007669"/>
    <property type="project" value="InterPro"/>
</dbReference>
<dbReference type="GO" id="GO:0042254">
    <property type="term" value="P:ribosome biogenesis"/>
    <property type="evidence" value="ECO:0007669"/>
    <property type="project" value="InterPro"/>
</dbReference>
<dbReference type="GO" id="GO:0006412">
    <property type="term" value="P:translation"/>
    <property type="evidence" value="ECO:0007669"/>
    <property type="project" value="UniProtKB-UniRule"/>
</dbReference>
<dbReference type="GO" id="GO:0001682">
    <property type="term" value="P:tRNA 5'-leader removal"/>
    <property type="evidence" value="ECO:0007669"/>
    <property type="project" value="UniProtKB-UniRule"/>
</dbReference>
<dbReference type="FunFam" id="3.30.1330.30:FF:000020">
    <property type="entry name" value="50S ribosomal protein L7Ae"/>
    <property type="match status" value="1"/>
</dbReference>
<dbReference type="Gene3D" id="3.30.1330.30">
    <property type="match status" value="1"/>
</dbReference>
<dbReference type="HAMAP" id="MF_00326">
    <property type="entry name" value="Ribosomal_eL8"/>
    <property type="match status" value="1"/>
</dbReference>
<dbReference type="InterPro" id="IPR050257">
    <property type="entry name" value="eL8/uL1-like"/>
</dbReference>
<dbReference type="InterPro" id="IPR029064">
    <property type="entry name" value="Ribosomal_eL30-like_sf"/>
</dbReference>
<dbReference type="InterPro" id="IPR004037">
    <property type="entry name" value="Ribosomal_eL8-like_CS"/>
</dbReference>
<dbReference type="InterPro" id="IPR004038">
    <property type="entry name" value="Ribosomal_eL8/eL30/eS12/Gad45"/>
</dbReference>
<dbReference type="InterPro" id="IPR018492">
    <property type="entry name" value="Ribosomal_eL8/Nhp2"/>
</dbReference>
<dbReference type="InterPro" id="IPR022481">
    <property type="entry name" value="Ribosomal_eL8_arc"/>
</dbReference>
<dbReference type="NCBIfam" id="TIGR03677">
    <property type="entry name" value="eL8_ribo"/>
    <property type="match status" value="1"/>
</dbReference>
<dbReference type="PANTHER" id="PTHR23105">
    <property type="entry name" value="RIBOSOMAL PROTEIN L7AE FAMILY MEMBER"/>
    <property type="match status" value="1"/>
</dbReference>
<dbReference type="Pfam" id="PF01248">
    <property type="entry name" value="Ribosomal_L7Ae"/>
    <property type="match status" value="1"/>
</dbReference>
<dbReference type="PRINTS" id="PR00881">
    <property type="entry name" value="L7ARS6FAMILY"/>
</dbReference>
<dbReference type="PRINTS" id="PR00884">
    <property type="entry name" value="RIBOSOMALHS6"/>
</dbReference>
<dbReference type="SUPFAM" id="SSF55315">
    <property type="entry name" value="L30e-like"/>
    <property type="match status" value="1"/>
</dbReference>
<dbReference type="PROSITE" id="PS01082">
    <property type="entry name" value="RIBOSOMAL_L7AE"/>
    <property type="match status" value="1"/>
</dbReference>
<comment type="function">
    <text evidence="1">Multifunctional RNA-binding protein that recognizes the K-turn motif in ribosomal RNA, the RNA component of RNase P, box H/ACA, box C/D and box C'/D' sRNAs.</text>
</comment>
<comment type="subunit">
    <text evidence="1">Part of the 50S ribosomal subunit. Probably part of the RNase P complex.</text>
</comment>
<comment type="subcellular location">
    <subcellularLocation>
        <location evidence="1">Cytoplasm</location>
    </subcellularLocation>
</comment>
<comment type="similarity">
    <text evidence="1">Belongs to the eukaryotic ribosomal protein eL8 family.</text>
</comment>
<name>RL7A_THEAC</name>
<evidence type="ECO:0000255" key="1">
    <source>
        <dbReference type="HAMAP-Rule" id="MF_00326"/>
    </source>
</evidence>
<evidence type="ECO:0000305" key="2"/>
<gene>
    <name evidence="1" type="primary">rpl7ae</name>
    <name type="ordered locus">Ta1116</name>
</gene>
<sequence>MEKSYVKFETPEDVSQKALDLVESSYRTGKVKKGTNEVIKSIERGESKLVVIAEDVNPPEVVYYLPSLCEDKKVPYVYVKKKADLGSKVGIASAASVSIVDYGKNEELYKSIVSALEQIKK</sequence>
<protein>
    <recommendedName>
        <fullName evidence="1">Large ribosomal subunit protein eL8</fullName>
    </recommendedName>
    <alternativeName>
        <fullName evidence="2">50S ribosomal protein L7Ae</fullName>
    </alternativeName>
    <alternativeName>
        <fullName evidence="1">Ribosomal protein L8e</fullName>
    </alternativeName>
</protein>